<keyword id="KW-0158">Chromosome</keyword>
<keyword id="KW-0175">Coiled coil</keyword>
<keyword id="KW-0489">Methyltransferase</keyword>
<keyword id="KW-0539">Nucleus</keyword>
<keyword id="KW-1185">Reference proteome</keyword>
<keyword id="KW-0678">Repressor</keyword>
<keyword id="KW-0949">S-adenosyl-L-methionine</keyword>
<keyword id="KW-0804">Transcription</keyword>
<keyword id="KW-0805">Transcription regulation</keyword>
<keyword id="KW-0808">Transferase</keyword>
<feature type="chain" id="PRO_0000269787" description="Histone-lysine N-methyltransferase, H3 lysine-36 specific">
    <location>
        <begin position="1"/>
        <end position="731"/>
    </location>
</feature>
<feature type="domain" description="AWS" evidence="7">
    <location>
        <begin position="52"/>
        <end position="108"/>
    </location>
</feature>
<feature type="domain" description="SET" evidence="5">
    <location>
        <begin position="110"/>
        <end position="227"/>
    </location>
</feature>
<feature type="domain" description="Post-SET" evidence="4">
    <location>
        <begin position="234"/>
        <end position="250"/>
    </location>
</feature>
<feature type="domain" description="WW" evidence="6">
    <location>
        <begin position="477"/>
        <end position="511"/>
    </location>
</feature>
<feature type="region of interest" description="Disordered" evidence="9">
    <location>
        <begin position="436"/>
        <end position="487"/>
    </location>
</feature>
<feature type="region of interest" description="Disordered" evidence="9">
    <location>
        <begin position="510"/>
        <end position="552"/>
    </location>
</feature>
<feature type="region of interest" description="Disordered" evidence="9">
    <location>
        <begin position="606"/>
        <end position="628"/>
    </location>
</feature>
<feature type="region of interest" description="Disordered" evidence="9">
    <location>
        <begin position="708"/>
        <end position="731"/>
    </location>
</feature>
<feature type="coiled-coil region" evidence="3">
    <location>
        <begin position="539"/>
        <end position="618"/>
    </location>
</feature>
<feature type="compositionally biased region" description="Basic and acidic residues" evidence="9">
    <location>
        <begin position="460"/>
        <end position="475"/>
    </location>
</feature>
<feature type="compositionally biased region" description="Polar residues" evidence="9">
    <location>
        <begin position="531"/>
        <end position="540"/>
    </location>
</feature>
<feature type="compositionally biased region" description="Basic and acidic residues" evidence="9">
    <location>
        <begin position="541"/>
        <end position="552"/>
    </location>
</feature>
<feature type="compositionally biased region" description="Basic residues" evidence="9">
    <location>
        <begin position="607"/>
        <end position="616"/>
    </location>
</feature>
<feature type="compositionally biased region" description="Basic and acidic residues" evidence="9">
    <location>
        <begin position="716"/>
        <end position="731"/>
    </location>
</feature>
<sequence length="731" mass="84410">MSDMEELDVKAKQYTPQLFLESEDKTDEARSTFNELQECTYSSKSTGSSGQHEHMTCDCYEDWDSDKQQNMACGEDSDCINRVTSVECSNKFCTCGNDCQNQRFQKKQYANVTVIQTELKGYGLRANEDISESSFIYEYIGEVIDEESFRKRMIDYDTKKLIHFYFMMLKKDSFIDATMKGSLARFCNHSCNPNAYVDKWVVGEKLRMGIFSKRNIQKGEEITFDYNVDRYGAQSQPCYCGEPNCIKWMGGKTQTDAALLLPDGISEALGVTHKQERQWLKENKHLRSKQQSDESIINEAFVKSIEVSALTESDVSKVMGALMRVQDLNITQKLIERIYLTSDDSINSSIIRVHGYKTLSQTIKAFKDEDKELISKILIILAKWPKVTRNKISSSQIEDVVKDINTNSNDDNLKKLSSDLLAEWGKLQMAYRIPKNIGNDKESNSPALYGRNARSRSRSRSPDRGKSAEPQHVETDEALPDGWQTAFDPNTQTNYYYHAELGISKWERPIKEVPKGPKGPKALPVSEPIQRPNSNSNGRSYNEEELTRREEERLKREKEEQFKEIQQKERLLQELILQSQKELEEKKSFEEKMKLEKLEKEKERQALKRKKLKKSKSSIPPAPPVPIDGQWTKTFAKHVPNFLKKYEAEIGRDNIKGCAKELVKTLVAKEMKKNPDTKPPKELDNAKLKKIKEYSKMFMDKFLIKYRSKHDKKRSHNEENGGTKRVKPDVE</sequence>
<comment type="function">
    <text evidence="2">Histone methyltransferase that trimethylates histone H3 'Lys-36' forming H3K36me3. Involved in transcription elongation as well as in transcription repression.</text>
</comment>
<comment type="catalytic activity">
    <reaction evidence="2 8">
        <text>L-lysyl(36)-[histone H3] + 3 S-adenosyl-L-methionine = N(6),N(6),N(6)-trimethyl-L-lysyl(36)-[histone H3] + 3 S-adenosyl-L-homocysteine + 3 H(+)</text>
        <dbReference type="Rhea" id="RHEA:60324"/>
        <dbReference type="Rhea" id="RHEA-COMP:9785"/>
        <dbReference type="Rhea" id="RHEA-COMP:15536"/>
        <dbReference type="ChEBI" id="CHEBI:15378"/>
        <dbReference type="ChEBI" id="CHEBI:29969"/>
        <dbReference type="ChEBI" id="CHEBI:57856"/>
        <dbReference type="ChEBI" id="CHEBI:59789"/>
        <dbReference type="ChEBI" id="CHEBI:61961"/>
        <dbReference type="EC" id="2.1.1.359"/>
    </reaction>
</comment>
<comment type="subcellular location">
    <subcellularLocation>
        <location evidence="1">Nucleus</location>
    </subcellularLocation>
    <subcellularLocation>
        <location evidence="1">Chromosome</location>
    </subcellularLocation>
</comment>
<comment type="domain">
    <text evidence="1">The AWS and SET domains are necessary for transcription repression.</text>
</comment>
<comment type="similarity">
    <text evidence="8">Belongs to the class V-like SAM-binding methyltransferase superfamily. Histone-lysine methyltransferase family. SET2 subfamily.</text>
</comment>
<protein>
    <recommendedName>
        <fullName>Histone-lysine N-methyltransferase, H3 lysine-36 specific</fullName>
        <ecNumber evidence="2">2.1.1.359</ecNumber>
    </recommendedName>
    <alternativeName>
        <fullName>SET domain-containing protein 2</fullName>
    </alternativeName>
</protein>
<name>SET2_DEBHA</name>
<accession>Q6BM04</accession>
<proteinExistence type="inferred from homology"/>
<reference key="1">
    <citation type="journal article" date="2004" name="Nature">
        <title>Genome evolution in yeasts.</title>
        <authorList>
            <person name="Dujon B."/>
            <person name="Sherman D."/>
            <person name="Fischer G."/>
            <person name="Durrens P."/>
            <person name="Casaregola S."/>
            <person name="Lafontaine I."/>
            <person name="de Montigny J."/>
            <person name="Marck C."/>
            <person name="Neuveglise C."/>
            <person name="Talla E."/>
            <person name="Goffard N."/>
            <person name="Frangeul L."/>
            <person name="Aigle M."/>
            <person name="Anthouard V."/>
            <person name="Babour A."/>
            <person name="Barbe V."/>
            <person name="Barnay S."/>
            <person name="Blanchin S."/>
            <person name="Beckerich J.-M."/>
            <person name="Beyne E."/>
            <person name="Bleykasten C."/>
            <person name="Boisrame A."/>
            <person name="Boyer J."/>
            <person name="Cattolico L."/>
            <person name="Confanioleri F."/>
            <person name="de Daruvar A."/>
            <person name="Despons L."/>
            <person name="Fabre E."/>
            <person name="Fairhead C."/>
            <person name="Ferry-Dumazet H."/>
            <person name="Groppi A."/>
            <person name="Hantraye F."/>
            <person name="Hennequin C."/>
            <person name="Jauniaux N."/>
            <person name="Joyet P."/>
            <person name="Kachouri R."/>
            <person name="Kerrest A."/>
            <person name="Koszul R."/>
            <person name="Lemaire M."/>
            <person name="Lesur I."/>
            <person name="Ma L."/>
            <person name="Muller H."/>
            <person name="Nicaud J.-M."/>
            <person name="Nikolski M."/>
            <person name="Oztas S."/>
            <person name="Ozier-Kalogeropoulos O."/>
            <person name="Pellenz S."/>
            <person name="Potier S."/>
            <person name="Richard G.-F."/>
            <person name="Straub M.-L."/>
            <person name="Suleau A."/>
            <person name="Swennen D."/>
            <person name="Tekaia F."/>
            <person name="Wesolowski-Louvel M."/>
            <person name="Westhof E."/>
            <person name="Wirth B."/>
            <person name="Zeniou-Meyer M."/>
            <person name="Zivanovic Y."/>
            <person name="Bolotin-Fukuhara M."/>
            <person name="Thierry A."/>
            <person name="Bouchier C."/>
            <person name="Caudron B."/>
            <person name="Scarpelli C."/>
            <person name="Gaillardin C."/>
            <person name="Weissenbach J."/>
            <person name="Wincker P."/>
            <person name="Souciet J.-L."/>
        </authorList>
    </citation>
    <scope>NUCLEOTIDE SEQUENCE [LARGE SCALE GENOMIC DNA]</scope>
    <source>
        <strain>ATCC 36239 / CBS 767 / BCRC 21394 / JCM 1990 / NBRC 0083 / IGC 2968</strain>
    </source>
</reference>
<gene>
    <name type="primary">SET2</name>
    <name type="ordered locus">DEHA2F09350g</name>
</gene>
<organism>
    <name type="scientific">Debaryomyces hansenii (strain ATCC 36239 / CBS 767 / BCRC 21394 / JCM 1990 / NBRC 0083 / IGC 2968)</name>
    <name type="common">Yeast</name>
    <name type="synonym">Torulaspora hansenii</name>
    <dbReference type="NCBI Taxonomy" id="284592"/>
    <lineage>
        <taxon>Eukaryota</taxon>
        <taxon>Fungi</taxon>
        <taxon>Dikarya</taxon>
        <taxon>Ascomycota</taxon>
        <taxon>Saccharomycotina</taxon>
        <taxon>Pichiomycetes</taxon>
        <taxon>Debaryomycetaceae</taxon>
        <taxon>Debaryomyces</taxon>
    </lineage>
</organism>
<dbReference type="EC" id="2.1.1.359" evidence="2"/>
<dbReference type="EMBL" id="CR382138">
    <property type="protein sequence ID" value="CAG89108.2"/>
    <property type="molecule type" value="Genomic_DNA"/>
</dbReference>
<dbReference type="RefSeq" id="XP_460767.2">
    <property type="nucleotide sequence ID" value="XM_460767.1"/>
</dbReference>
<dbReference type="SMR" id="Q6BM04"/>
<dbReference type="FunCoup" id="Q6BM04">
    <property type="interactions" value="131"/>
</dbReference>
<dbReference type="STRING" id="284592.Q6BM04"/>
<dbReference type="GeneID" id="2903609"/>
<dbReference type="KEGG" id="dha:DEHA2F09350g"/>
<dbReference type="VEuPathDB" id="FungiDB:DEHA2F09350g"/>
<dbReference type="eggNOG" id="KOG4442">
    <property type="taxonomic scope" value="Eukaryota"/>
</dbReference>
<dbReference type="HOGENOM" id="CLU_008492_1_1_1"/>
<dbReference type="InParanoid" id="Q6BM04"/>
<dbReference type="OMA" id="AQSQPCY"/>
<dbReference type="OrthoDB" id="422362at2759"/>
<dbReference type="Proteomes" id="UP000000599">
    <property type="component" value="Chromosome F"/>
</dbReference>
<dbReference type="GO" id="GO:0005694">
    <property type="term" value="C:chromosome"/>
    <property type="evidence" value="ECO:0007669"/>
    <property type="project" value="UniProtKB-SubCell"/>
</dbReference>
<dbReference type="GO" id="GO:0005829">
    <property type="term" value="C:cytosol"/>
    <property type="evidence" value="ECO:0007669"/>
    <property type="project" value="EnsemblFungi"/>
</dbReference>
<dbReference type="GO" id="GO:0005634">
    <property type="term" value="C:nucleus"/>
    <property type="evidence" value="ECO:0007669"/>
    <property type="project" value="UniProtKB-SubCell"/>
</dbReference>
<dbReference type="GO" id="GO:0140955">
    <property type="term" value="F:histone H3K36 trimethyltransferase activity"/>
    <property type="evidence" value="ECO:0007669"/>
    <property type="project" value="UniProtKB-EC"/>
</dbReference>
<dbReference type="GO" id="GO:0003723">
    <property type="term" value="F:RNA binding"/>
    <property type="evidence" value="ECO:0007669"/>
    <property type="project" value="EnsemblFungi"/>
</dbReference>
<dbReference type="GO" id="GO:0030437">
    <property type="term" value="P:ascospore formation"/>
    <property type="evidence" value="ECO:0007669"/>
    <property type="project" value="EnsemblFungi"/>
</dbReference>
<dbReference type="GO" id="GO:0006354">
    <property type="term" value="P:DNA-templated transcription elongation"/>
    <property type="evidence" value="ECO:0007669"/>
    <property type="project" value="EnsemblFungi"/>
</dbReference>
<dbReference type="GO" id="GO:0006353">
    <property type="term" value="P:DNA-templated transcription termination"/>
    <property type="evidence" value="ECO:0007669"/>
    <property type="project" value="EnsemblFungi"/>
</dbReference>
<dbReference type="GO" id="GO:0032259">
    <property type="term" value="P:methylation"/>
    <property type="evidence" value="ECO:0007669"/>
    <property type="project" value="UniProtKB-KW"/>
</dbReference>
<dbReference type="GO" id="GO:0060195">
    <property type="term" value="P:negative regulation of antisense RNA transcription"/>
    <property type="evidence" value="ECO:0007669"/>
    <property type="project" value="EnsemblFungi"/>
</dbReference>
<dbReference type="GO" id="GO:0045128">
    <property type="term" value="P:negative regulation of reciprocal meiotic recombination"/>
    <property type="evidence" value="ECO:0007669"/>
    <property type="project" value="EnsemblFungi"/>
</dbReference>
<dbReference type="GO" id="GO:0030174">
    <property type="term" value="P:regulation of DNA-templated DNA replication initiation"/>
    <property type="evidence" value="ECO:0007669"/>
    <property type="project" value="EnsemblFungi"/>
</dbReference>
<dbReference type="GO" id="GO:0009302">
    <property type="term" value="P:sno(s)RNA transcription"/>
    <property type="evidence" value="ECO:0007669"/>
    <property type="project" value="EnsemblFungi"/>
</dbReference>
<dbReference type="GO" id="GO:0006283">
    <property type="term" value="P:transcription-coupled nucleotide-excision repair"/>
    <property type="evidence" value="ECO:0007669"/>
    <property type="project" value="EnsemblFungi"/>
</dbReference>
<dbReference type="CDD" id="cd19172">
    <property type="entry name" value="SET_SETD2"/>
    <property type="match status" value="1"/>
</dbReference>
<dbReference type="CDD" id="cd00201">
    <property type="entry name" value="WW"/>
    <property type="match status" value="1"/>
</dbReference>
<dbReference type="FunFam" id="2.170.270.10:FF:000033">
    <property type="entry name" value="Histone-lysine N-methyltransferase"/>
    <property type="match status" value="1"/>
</dbReference>
<dbReference type="Gene3D" id="2.20.70.10">
    <property type="match status" value="1"/>
</dbReference>
<dbReference type="Gene3D" id="2.170.270.10">
    <property type="entry name" value="SET domain"/>
    <property type="match status" value="1"/>
</dbReference>
<dbReference type="Gene3D" id="1.10.1740.100">
    <property type="entry name" value="Set2, Rpb1 interacting domain"/>
    <property type="match status" value="1"/>
</dbReference>
<dbReference type="InterPro" id="IPR006560">
    <property type="entry name" value="AWS_dom"/>
</dbReference>
<dbReference type="InterPro" id="IPR003616">
    <property type="entry name" value="Post-SET_dom"/>
</dbReference>
<dbReference type="InterPro" id="IPR025788">
    <property type="entry name" value="Set2_fungi"/>
</dbReference>
<dbReference type="InterPro" id="IPR050777">
    <property type="entry name" value="SET2_Histone-Lys_MeTrsfase"/>
</dbReference>
<dbReference type="InterPro" id="IPR001214">
    <property type="entry name" value="SET_dom"/>
</dbReference>
<dbReference type="InterPro" id="IPR046341">
    <property type="entry name" value="SET_dom_sf"/>
</dbReference>
<dbReference type="InterPro" id="IPR044437">
    <property type="entry name" value="SETD2/Set2_SET"/>
</dbReference>
<dbReference type="InterPro" id="IPR013257">
    <property type="entry name" value="SRI"/>
</dbReference>
<dbReference type="InterPro" id="IPR038190">
    <property type="entry name" value="SRI_sf"/>
</dbReference>
<dbReference type="InterPro" id="IPR035441">
    <property type="entry name" value="TFIIS/LEDGF_dom_sf"/>
</dbReference>
<dbReference type="InterPro" id="IPR017923">
    <property type="entry name" value="TFIIS_N"/>
</dbReference>
<dbReference type="InterPro" id="IPR001202">
    <property type="entry name" value="WW_dom"/>
</dbReference>
<dbReference type="InterPro" id="IPR036020">
    <property type="entry name" value="WW_dom_sf"/>
</dbReference>
<dbReference type="PANTHER" id="PTHR22884">
    <property type="entry name" value="SET DOMAIN PROTEINS"/>
    <property type="match status" value="1"/>
</dbReference>
<dbReference type="Pfam" id="PF17907">
    <property type="entry name" value="AWS"/>
    <property type="match status" value="1"/>
</dbReference>
<dbReference type="Pfam" id="PF08711">
    <property type="entry name" value="Med26"/>
    <property type="match status" value="1"/>
</dbReference>
<dbReference type="Pfam" id="PF00856">
    <property type="entry name" value="SET"/>
    <property type="match status" value="1"/>
</dbReference>
<dbReference type="Pfam" id="PF08236">
    <property type="entry name" value="SRI"/>
    <property type="match status" value="1"/>
</dbReference>
<dbReference type="Pfam" id="PF00397">
    <property type="entry name" value="WW"/>
    <property type="match status" value="1"/>
</dbReference>
<dbReference type="SMART" id="SM00570">
    <property type="entry name" value="AWS"/>
    <property type="match status" value="1"/>
</dbReference>
<dbReference type="SMART" id="SM00508">
    <property type="entry name" value="PostSET"/>
    <property type="match status" value="1"/>
</dbReference>
<dbReference type="SMART" id="SM00317">
    <property type="entry name" value="SET"/>
    <property type="match status" value="1"/>
</dbReference>
<dbReference type="SMART" id="SM00456">
    <property type="entry name" value="WW"/>
    <property type="match status" value="1"/>
</dbReference>
<dbReference type="SUPFAM" id="SSF47676">
    <property type="entry name" value="Conserved domain common to transcription factors TFIIS, elongin A, CRSP70"/>
    <property type="match status" value="1"/>
</dbReference>
<dbReference type="SUPFAM" id="SSF82199">
    <property type="entry name" value="SET domain"/>
    <property type="match status" value="1"/>
</dbReference>
<dbReference type="SUPFAM" id="SSF51045">
    <property type="entry name" value="WW domain"/>
    <property type="match status" value="1"/>
</dbReference>
<dbReference type="PROSITE" id="PS51215">
    <property type="entry name" value="AWS"/>
    <property type="match status" value="1"/>
</dbReference>
<dbReference type="PROSITE" id="PS50868">
    <property type="entry name" value="POST_SET"/>
    <property type="match status" value="1"/>
</dbReference>
<dbReference type="PROSITE" id="PS51568">
    <property type="entry name" value="SAM_MT43_SET2_1"/>
    <property type="match status" value="1"/>
</dbReference>
<dbReference type="PROSITE" id="PS50280">
    <property type="entry name" value="SET"/>
    <property type="match status" value="1"/>
</dbReference>
<dbReference type="PROSITE" id="PS50020">
    <property type="entry name" value="WW_DOMAIN_2"/>
    <property type="match status" value="1"/>
</dbReference>
<evidence type="ECO:0000250" key="1"/>
<evidence type="ECO:0000250" key="2">
    <source>
        <dbReference type="UniProtKB" id="P46995"/>
    </source>
</evidence>
<evidence type="ECO:0000255" key="3"/>
<evidence type="ECO:0000255" key="4">
    <source>
        <dbReference type="PROSITE-ProRule" id="PRU00155"/>
    </source>
</evidence>
<evidence type="ECO:0000255" key="5">
    <source>
        <dbReference type="PROSITE-ProRule" id="PRU00190"/>
    </source>
</evidence>
<evidence type="ECO:0000255" key="6">
    <source>
        <dbReference type="PROSITE-ProRule" id="PRU00224"/>
    </source>
</evidence>
<evidence type="ECO:0000255" key="7">
    <source>
        <dbReference type="PROSITE-ProRule" id="PRU00562"/>
    </source>
</evidence>
<evidence type="ECO:0000255" key="8">
    <source>
        <dbReference type="PROSITE-ProRule" id="PRU00901"/>
    </source>
</evidence>
<evidence type="ECO:0000256" key="9">
    <source>
        <dbReference type="SAM" id="MobiDB-lite"/>
    </source>
</evidence>